<sequence length="179" mass="20278">MKFFIFTCLVAAALAKHAVKDKPSSEESASVYLGKYKQGNSVFFQTPQDSASSSSSEESSEEISEKIEQSEEQKVNLNQQKKSKQFSQDSSFPQICTPYQQQSSVNQRPQPNAIYDVPSQESTSTSVEEILKKIIDIVKYFQYQQLTNPHFPQAVHPQIRVSSWAPSKDYTFPTARYMA</sequence>
<organism>
    <name type="scientific">Rattus norvegicus</name>
    <name type="common">Rat</name>
    <dbReference type="NCBI Taxonomy" id="10116"/>
    <lineage>
        <taxon>Eukaryota</taxon>
        <taxon>Metazoa</taxon>
        <taxon>Chordata</taxon>
        <taxon>Craniata</taxon>
        <taxon>Vertebrata</taxon>
        <taxon>Euteleostomi</taxon>
        <taxon>Mammalia</taxon>
        <taxon>Eutheria</taxon>
        <taxon>Euarchontoglires</taxon>
        <taxon>Glires</taxon>
        <taxon>Rodentia</taxon>
        <taxon>Myomorpha</taxon>
        <taxon>Muroidea</taxon>
        <taxon>Muridae</taxon>
        <taxon>Murinae</taxon>
        <taxon>Rattus</taxon>
    </lineage>
</organism>
<accession>P02667</accession>
<reference key="1">
    <citation type="journal article" date="1982" name="Nucleic Acids Res.">
        <title>Sequence of rat alpha- and gamma-casein mRNAs: evolutionary comparison of the calcium-dependent rat casein multigene family.</title>
        <authorList>
            <person name="Hobbs A.A."/>
            <person name="Rosen J.M."/>
        </authorList>
    </citation>
    <scope>NUCLEOTIDE SEQUENCE [MRNA]</scope>
</reference>
<proteinExistence type="evidence at transcript level"/>
<name>CS2LA_RAT</name>
<comment type="function">
    <text>Important role in the capacity of milk to transport calcium phosphate.</text>
</comment>
<comment type="subcellular location">
    <subcellularLocation>
        <location>Secreted</location>
    </subcellularLocation>
</comment>
<comment type="tissue specificity">
    <text>Mammary gland specific. Secreted in milk.</text>
</comment>
<comment type="similarity">
    <text evidence="4">Belongs to the alpha-casein family.</text>
</comment>
<keyword id="KW-0494">Milk protein</keyword>
<keyword id="KW-0597">Phosphoprotein</keyword>
<keyword id="KW-1185">Reference proteome</keyword>
<keyword id="KW-0964">Secreted</keyword>
<keyword id="KW-0732">Signal</keyword>
<feature type="signal peptide" evidence="1">
    <location>
        <begin position="1"/>
        <end position="15"/>
    </location>
</feature>
<feature type="chain" id="PRO_0000004468" description="Alpha-S2-casein-like A">
    <location>
        <begin position="16"/>
        <end position="179"/>
    </location>
</feature>
<feature type="region of interest" description="Disordered" evidence="3">
    <location>
        <begin position="44"/>
        <end position="121"/>
    </location>
</feature>
<feature type="compositionally biased region" description="Basic and acidic residues" evidence="3">
    <location>
        <begin position="63"/>
        <end position="74"/>
    </location>
</feature>
<feature type="compositionally biased region" description="Polar residues" evidence="3">
    <location>
        <begin position="93"/>
        <end position="110"/>
    </location>
</feature>
<feature type="modified residue" description="Phosphoserine" evidence="2">
    <location>
        <position position="24"/>
    </location>
</feature>
<feature type="modified residue" description="Phosphoserine" evidence="2">
    <location>
        <position position="25"/>
    </location>
</feature>
<gene>
    <name type="primary">Csn1s2a</name>
    <name type="synonym">Csng</name>
</gene>
<protein>
    <recommendedName>
        <fullName>Alpha-S2-casein-like A</fullName>
    </recommendedName>
    <alternativeName>
        <fullName>Casein alpha S2-like A</fullName>
    </alternativeName>
    <alternativeName>
        <fullName>Gamma-casein</fullName>
    </alternativeName>
</protein>
<evidence type="ECO:0000250" key="1"/>
<evidence type="ECO:0000250" key="2">
    <source>
        <dbReference type="UniProtKB" id="Q02862"/>
    </source>
</evidence>
<evidence type="ECO:0000256" key="3">
    <source>
        <dbReference type="SAM" id="MobiDB-lite"/>
    </source>
</evidence>
<evidence type="ECO:0000305" key="4"/>
<dbReference type="EMBL" id="J00712">
    <property type="status" value="NOT_ANNOTATED_CDS"/>
    <property type="molecule type" value="mRNA"/>
</dbReference>
<dbReference type="PIR" id="A03111">
    <property type="entry name" value="KGRT"/>
</dbReference>
<dbReference type="SMR" id="P02667"/>
<dbReference type="STRING" id="10116.ENSRNOP00000057022"/>
<dbReference type="Allergome" id="2151">
    <property type="allergen name" value="Rat n 8"/>
</dbReference>
<dbReference type="PhosphoSitePlus" id="P02667"/>
<dbReference type="PaxDb" id="10116-ENSRNOP00000057022"/>
<dbReference type="UCSC" id="RGD:621152">
    <property type="organism name" value="rat"/>
</dbReference>
<dbReference type="AGR" id="RGD:621152"/>
<dbReference type="RGD" id="621152">
    <property type="gene designation" value="Csn1s2a"/>
</dbReference>
<dbReference type="InParanoid" id="P02667"/>
<dbReference type="OrthoDB" id="9564348at2759"/>
<dbReference type="PRO" id="PR:P02667"/>
<dbReference type="Proteomes" id="UP000002494">
    <property type="component" value="Unplaced"/>
</dbReference>
<dbReference type="GO" id="GO:0005615">
    <property type="term" value="C:extracellular space"/>
    <property type="evidence" value="ECO:0000318"/>
    <property type="project" value="GO_Central"/>
</dbReference>
<dbReference type="GO" id="GO:0042803">
    <property type="term" value="F:protein homodimerization activity"/>
    <property type="evidence" value="ECO:0000318"/>
    <property type="project" value="GO_Central"/>
</dbReference>
<dbReference type="GO" id="GO:0035375">
    <property type="term" value="F:zymogen binding"/>
    <property type="evidence" value="ECO:0000318"/>
    <property type="project" value="GO_Central"/>
</dbReference>
<dbReference type="InterPro" id="IPR011175">
    <property type="entry name" value="Alpha-s2_casein"/>
</dbReference>
<dbReference type="InterPro" id="IPR031305">
    <property type="entry name" value="Casein_CS"/>
</dbReference>
<dbReference type="PANTHER" id="PTHR16656:SF7">
    <property type="entry name" value="ALPHA-S2-CASEIN-LIKE A"/>
    <property type="match status" value="1"/>
</dbReference>
<dbReference type="PANTHER" id="PTHR16656">
    <property type="entry name" value="ALPHA-S2-CASEIN-LIKE B"/>
    <property type="match status" value="1"/>
</dbReference>
<dbReference type="PROSITE" id="PS00306">
    <property type="entry name" value="CASEIN_ALPHA_BETA"/>
    <property type="match status" value="1"/>
</dbReference>